<evidence type="ECO:0000255" key="1">
    <source>
        <dbReference type="HAMAP-Rule" id="MF_01857"/>
    </source>
</evidence>
<sequence>MSVRLVLAKGREKSLLRRHPWVFSGAVARMEGKASLGETIDIVDHQGKWLARGAYSPASQIRARVWTFDPSESIDIAFFSRRLQQAQKWRDWLAQKDGLDSYRLIAGESDGLPGITIDRFGNFLVLQLLSAGAEYQRAALISALQTLYPECSIYDRSDVAVRKKEGMELTQGPVTGELPPALLPIEEHGMKLLVDIQHGHKTGYYLDQRDSRLATRRYVENKRVLNCFSYTGGFAVSALMGGCSQVVSVDTSQEALDIARQNVELNKLDLSKAEFVRDDVFKLLRTYRDRGEKFDVIVMDPPKFVENKSQLMGACRGYKDINMLAIQLLNEGGILLTFSCSGLMTSDLFQKIIADAAIDAGRDVQFIEQFRQAADHPVIATYPEGLYLKGFACRVM</sequence>
<keyword id="KW-0963">Cytoplasm</keyword>
<keyword id="KW-0489">Methyltransferase</keyword>
<keyword id="KW-0694">RNA-binding</keyword>
<keyword id="KW-0698">rRNA processing</keyword>
<keyword id="KW-0949">S-adenosyl-L-methionine</keyword>
<keyword id="KW-0808">Transferase</keyword>
<proteinExistence type="inferred from homology"/>
<accession>B6I942</accession>
<feature type="chain" id="PRO_1000188699" description="Ribosomal RNA large subunit methyltransferase I">
    <location>
        <begin position="1"/>
        <end position="396"/>
    </location>
</feature>
<feature type="domain" description="PUA" evidence="1">
    <location>
        <begin position="2"/>
        <end position="81"/>
    </location>
</feature>
<dbReference type="EC" id="2.1.1.191" evidence="1"/>
<dbReference type="EMBL" id="AP009240">
    <property type="protein sequence ID" value="BAG76553.1"/>
    <property type="molecule type" value="Genomic_DNA"/>
</dbReference>
<dbReference type="RefSeq" id="WP_000116297.1">
    <property type="nucleotide sequence ID" value="NC_011415.1"/>
</dbReference>
<dbReference type="SMR" id="B6I942"/>
<dbReference type="KEGG" id="ecy:ECSE_1029"/>
<dbReference type="HOGENOM" id="CLU_014042_0_0_6"/>
<dbReference type="Proteomes" id="UP000008199">
    <property type="component" value="Chromosome"/>
</dbReference>
<dbReference type="GO" id="GO:0005737">
    <property type="term" value="C:cytoplasm"/>
    <property type="evidence" value="ECO:0007669"/>
    <property type="project" value="UniProtKB-SubCell"/>
</dbReference>
<dbReference type="GO" id="GO:0003723">
    <property type="term" value="F:RNA binding"/>
    <property type="evidence" value="ECO:0007669"/>
    <property type="project" value="UniProtKB-KW"/>
</dbReference>
<dbReference type="GO" id="GO:0016434">
    <property type="term" value="F:rRNA (cytosine) methyltransferase activity"/>
    <property type="evidence" value="ECO:0007669"/>
    <property type="project" value="UniProtKB-UniRule"/>
</dbReference>
<dbReference type="CDD" id="cd02440">
    <property type="entry name" value="AdoMet_MTases"/>
    <property type="match status" value="1"/>
</dbReference>
<dbReference type="CDD" id="cd21153">
    <property type="entry name" value="PUA_RlmI"/>
    <property type="match status" value="1"/>
</dbReference>
<dbReference type="CDD" id="cd11572">
    <property type="entry name" value="RlmI_M_like"/>
    <property type="match status" value="1"/>
</dbReference>
<dbReference type="FunFam" id="2.30.130.10:FF:000005">
    <property type="entry name" value="Ribosomal RNA large subunit methyltransferase I"/>
    <property type="match status" value="1"/>
</dbReference>
<dbReference type="FunFam" id="3.30.750.80:FF:000002">
    <property type="entry name" value="Ribosomal RNA large subunit methyltransferase I"/>
    <property type="match status" value="1"/>
</dbReference>
<dbReference type="FunFam" id="3.40.50.150:FF:000044">
    <property type="entry name" value="Ribosomal RNA large subunit methyltransferase I"/>
    <property type="match status" value="1"/>
</dbReference>
<dbReference type="Gene3D" id="2.30.130.10">
    <property type="entry name" value="PUA domain"/>
    <property type="match status" value="1"/>
</dbReference>
<dbReference type="Gene3D" id="3.30.750.80">
    <property type="entry name" value="RNA methyltransferase domain (HRMD) like"/>
    <property type="match status" value="1"/>
</dbReference>
<dbReference type="Gene3D" id="3.40.50.150">
    <property type="entry name" value="Vaccinia Virus protein VP39"/>
    <property type="match status" value="1"/>
</dbReference>
<dbReference type="HAMAP" id="MF_01857">
    <property type="entry name" value="23SrRNA_methyltr_I"/>
    <property type="match status" value="1"/>
</dbReference>
<dbReference type="InterPro" id="IPR002478">
    <property type="entry name" value="PUA"/>
</dbReference>
<dbReference type="InterPro" id="IPR015947">
    <property type="entry name" value="PUA-like_sf"/>
</dbReference>
<dbReference type="InterPro" id="IPR036974">
    <property type="entry name" value="PUA_sf"/>
</dbReference>
<dbReference type="InterPro" id="IPR023542">
    <property type="entry name" value="RLMI"/>
</dbReference>
<dbReference type="InterPro" id="IPR041532">
    <property type="entry name" value="RlmI-like_PUA"/>
</dbReference>
<dbReference type="InterPro" id="IPR019614">
    <property type="entry name" value="SAM-dep_methyl-trfase"/>
</dbReference>
<dbReference type="InterPro" id="IPR029063">
    <property type="entry name" value="SAM-dependent_MTases_sf"/>
</dbReference>
<dbReference type="NCBIfam" id="NF011707">
    <property type="entry name" value="PRK15128.1"/>
    <property type="match status" value="1"/>
</dbReference>
<dbReference type="PANTHER" id="PTHR42873">
    <property type="entry name" value="RIBOSOMAL RNA LARGE SUBUNIT METHYLTRANSFERASE"/>
    <property type="match status" value="1"/>
</dbReference>
<dbReference type="PANTHER" id="PTHR42873:SF1">
    <property type="entry name" value="S-ADENOSYLMETHIONINE-DEPENDENT METHYLTRANSFERASE DOMAIN-CONTAINING PROTEIN"/>
    <property type="match status" value="1"/>
</dbReference>
<dbReference type="Pfam" id="PF10672">
    <property type="entry name" value="Methyltrans_SAM"/>
    <property type="match status" value="1"/>
</dbReference>
<dbReference type="Pfam" id="PF17785">
    <property type="entry name" value="PUA_3"/>
    <property type="match status" value="1"/>
</dbReference>
<dbReference type="SMART" id="SM00359">
    <property type="entry name" value="PUA"/>
    <property type="match status" value="1"/>
</dbReference>
<dbReference type="SUPFAM" id="SSF88697">
    <property type="entry name" value="PUA domain-like"/>
    <property type="match status" value="1"/>
</dbReference>
<dbReference type="SUPFAM" id="SSF53335">
    <property type="entry name" value="S-adenosyl-L-methionine-dependent methyltransferases"/>
    <property type="match status" value="1"/>
</dbReference>
<dbReference type="PROSITE" id="PS50890">
    <property type="entry name" value="PUA"/>
    <property type="match status" value="1"/>
</dbReference>
<protein>
    <recommendedName>
        <fullName evidence="1">Ribosomal RNA large subunit methyltransferase I</fullName>
        <ecNumber evidence="1">2.1.1.191</ecNumber>
    </recommendedName>
    <alternativeName>
        <fullName evidence="1">23S rRNA m5C1962 methyltransferase</fullName>
    </alternativeName>
    <alternativeName>
        <fullName evidence="1">rRNA (cytosine-C(5)-)-methyltransferase RlmI</fullName>
    </alternativeName>
</protein>
<reference key="1">
    <citation type="journal article" date="2008" name="DNA Res.">
        <title>Complete genome sequence and comparative analysis of the wild-type commensal Escherichia coli strain SE11 isolated from a healthy adult.</title>
        <authorList>
            <person name="Oshima K."/>
            <person name="Toh H."/>
            <person name="Ogura Y."/>
            <person name="Sasamoto H."/>
            <person name="Morita H."/>
            <person name="Park S.-H."/>
            <person name="Ooka T."/>
            <person name="Iyoda S."/>
            <person name="Taylor T.D."/>
            <person name="Hayashi T."/>
            <person name="Itoh K."/>
            <person name="Hattori M."/>
        </authorList>
    </citation>
    <scope>NUCLEOTIDE SEQUENCE [LARGE SCALE GENOMIC DNA]</scope>
    <source>
        <strain>SE11</strain>
    </source>
</reference>
<organism>
    <name type="scientific">Escherichia coli (strain SE11)</name>
    <dbReference type="NCBI Taxonomy" id="409438"/>
    <lineage>
        <taxon>Bacteria</taxon>
        <taxon>Pseudomonadati</taxon>
        <taxon>Pseudomonadota</taxon>
        <taxon>Gammaproteobacteria</taxon>
        <taxon>Enterobacterales</taxon>
        <taxon>Enterobacteriaceae</taxon>
        <taxon>Escherichia</taxon>
    </lineage>
</organism>
<name>RLMI_ECOSE</name>
<gene>
    <name evidence="1" type="primary">rlmI</name>
    <name type="ordered locus">ECSE_1029</name>
</gene>
<comment type="function">
    <text evidence="1">Specifically methylates the cytosine at position 1962 (m5C1962) of 23S rRNA.</text>
</comment>
<comment type="catalytic activity">
    <reaction evidence="1">
        <text>cytidine(1962) in 23S rRNA + S-adenosyl-L-methionine = 5-methylcytidine(1962) in 23S rRNA + S-adenosyl-L-homocysteine + H(+)</text>
        <dbReference type="Rhea" id="RHEA:42912"/>
        <dbReference type="Rhea" id="RHEA-COMP:10382"/>
        <dbReference type="Rhea" id="RHEA-COMP:10386"/>
        <dbReference type="ChEBI" id="CHEBI:15378"/>
        <dbReference type="ChEBI" id="CHEBI:57856"/>
        <dbReference type="ChEBI" id="CHEBI:59789"/>
        <dbReference type="ChEBI" id="CHEBI:74483"/>
        <dbReference type="ChEBI" id="CHEBI:82748"/>
        <dbReference type="EC" id="2.1.1.191"/>
    </reaction>
</comment>
<comment type="subcellular location">
    <subcellularLocation>
        <location evidence="1">Cytoplasm</location>
    </subcellularLocation>
</comment>
<comment type="similarity">
    <text evidence="1">Belongs to the methyltransferase superfamily. RlmI family.</text>
</comment>